<gene>
    <name evidence="1" type="primary">argH</name>
    <name type="ordered locus">SAR11_0415</name>
</gene>
<proteinExistence type="inferred from homology"/>
<keyword id="KW-0028">Amino-acid biosynthesis</keyword>
<keyword id="KW-0055">Arginine biosynthesis</keyword>
<keyword id="KW-0963">Cytoplasm</keyword>
<keyword id="KW-0456">Lyase</keyword>
<keyword id="KW-1185">Reference proteome</keyword>
<sequence>MVKNKNNMAIWGSRIKKDASTLFQKVGNSIDIDKKLFQEDILGSIAHVEMLFRQKIISFKIKNKIIFGLNKIEKEILKNKFEYNKKYEDIHMNIEKRLFQIIGEEAGYVHTARSRNDQVITDFKMWTTSATKEINKNLDNIIKTILKISEKNIETIMPGFTHLKNAQAVSFAHYLMSYVEMFNRDKKRFTYNLESLSENPLGVAALTGTSFNIDRNFTSKKLGFKRPTNNSIDTVADRDFVLDFLYSASVCSMHISRIAEELIIWNSDGFNLITLSDKVVTGSSIMPQKKNPDLLEYLRGKTGTVYGNLFSMLTILKGLPISYFKDLQDDKEILFKSNEILNNSIAILNEVLKNLKPNKQQMLDLANSGYITATDLADYLVKNHSMPFRKAYQTTASIVNYAEKKKKKLNELNIDELKKIEPRLTIEVLKIFNVKNSVNSKKSYGGTSFDNIKKMIMKYKKT</sequence>
<protein>
    <recommendedName>
        <fullName evidence="1">Argininosuccinate lyase</fullName>
        <shortName evidence="1">ASAL</shortName>
        <ecNumber evidence="1">4.3.2.1</ecNumber>
    </recommendedName>
    <alternativeName>
        <fullName evidence="1">Arginosuccinase</fullName>
    </alternativeName>
</protein>
<name>ARLY_PELUB</name>
<accession>Q4FNK3</accession>
<reference key="1">
    <citation type="journal article" date="2005" name="Science">
        <title>Genome streamlining in a cosmopolitan oceanic bacterium.</title>
        <authorList>
            <person name="Giovannoni S.J."/>
            <person name="Tripp H.J."/>
            <person name="Givan S."/>
            <person name="Podar M."/>
            <person name="Vergin K.L."/>
            <person name="Baptista D."/>
            <person name="Bibbs L."/>
            <person name="Eads J."/>
            <person name="Richardson T.H."/>
            <person name="Noordewier M."/>
            <person name="Rappe M.S."/>
            <person name="Short J.M."/>
            <person name="Carrington J.C."/>
            <person name="Mathur E.J."/>
        </authorList>
    </citation>
    <scope>NUCLEOTIDE SEQUENCE [LARGE SCALE GENOMIC DNA]</scope>
    <source>
        <strain>HTCC1062</strain>
    </source>
</reference>
<organism>
    <name type="scientific">Pelagibacter ubique (strain HTCC1062)</name>
    <dbReference type="NCBI Taxonomy" id="335992"/>
    <lineage>
        <taxon>Bacteria</taxon>
        <taxon>Pseudomonadati</taxon>
        <taxon>Pseudomonadota</taxon>
        <taxon>Alphaproteobacteria</taxon>
        <taxon>Candidatus Pelagibacterales</taxon>
        <taxon>Candidatus Pelagibacteraceae</taxon>
        <taxon>Candidatus Pelagibacter</taxon>
    </lineage>
</organism>
<feature type="chain" id="PRO_0000240746" description="Argininosuccinate lyase">
    <location>
        <begin position="1"/>
        <end position="462"/>
    </location>
</feature>
<comment type="catalytic activity">
    <reaction evidence="1">
        <text>2-(N(omega)-L-arginino)succinate = fumarate + L-arginine</text>
        <dbReference type="Rhea" id="RHEA:24020"/>
        <dbReference type="ChEBI" id="CHEBI:29806"/>
        <dbReference type="ChEBI" id="CHEBI:32682"/>
        <dbReference type="ChEBI" id="CHEBI:57472"/>
        <dbReference type="EC" id="4.3.2.1"/>
    </reaction>
</comment>
<comment type="pathway">
    <text evidence="1">Amino-acid biosynthesis; L-arginine biosynthesis; L-arginine from L-ornithine and carbamoyl phosphate: step 3/3.</text>
</comment>
<comment type="subcellular location">
    <subcellularLocation>
        <location evidence="1">Cytoplasm</location>
    </subcellularLocation>
</comment>
<comment type="similarity">
    <text evidence="1">Belongs to the lyase 1 family. Argininosuccinate lyase subfamily.</text>
</comment>
<dbReference type="EC" id="4.3.2.1" evidence="1"/>
<dbReference type="EMBL" id="CP000084">
    <property type="protein sequence ID" value="AAZ21236.1"/>
    <property type="molecule type" value="Genomic_DNA"/>
</dbReference>
<dbReference type="RefSeq" id="WP_011281693.1">
    <property type="nucleotide sequence ID" value="NC_007205.1"/>
</dbReference>
<dbReference type="SMR" id="Q4FNK3"/>
<dbReference type="STRING" id="335992.SAR11_0415"/>
<dbReference type="GeneID" id="66294911"/>
<dbReference type="KEGG" id="pub:SAR11_0415"/>
<dbReference type="eggNOG" id="COG0165">
    <property type="taxonomic scope" value="Bacteria"/>
</dbReference>
<dbReference type="HOGENOM" id="CLU_027272_2_3_5"/>
<dbReference type="OrthoDB" id="9769623at2"/>
<dbReference type="UniPathway" id="UPA00068">
    <property type="reaction ID" value="UER00114"/>
</dbReference>
<dbReference type="Proteomes" id="UP000002528">
    <property type="component" value="Chromosome"/>
</dbReference>
<dbReference type="GO" id="GO:0005829">
    <property type="term" value="C:cytosol"/>
    <property type="evidence" value="ECO:0007669"/>
    <property type="project" value="TreeGrafter"/>
</dbReference>
<dbReference type="GO" id="GO:0004056">
    <property type="term" value="F:argininosuccinate lyase activity"/>
    <property type="evidence" value="ECO:0007669"/>
    <property type="project" value="UniProtKB-UniRule"/>
</dbReference>
<dbReference type="GO" id="GO:0042450">
    <property type="term" value="P:arginine biosynthetic process via ornithine"/>
    <property type="evidence" value="ECO:0007669"/>
    <property type="project" value="InterPro"/>
</dbReference>
<dbReference type="GO" id="GO:0006526">
    <property type="term" value="P:L-arginine biosynthetic process"/>
    <property type="evidence" value="ECO:0007669"/>
    <property type="project" value="UniProtKB-UniRule"/>
</dbReference>
<dbReference type="CDD" id="cd01359">
    <property type="entry name" value="Argininosuccinate_lyase"/>
    <property type="match status" value="1"/>
</dbReference>
<dbReference type="FunFam" id="1.10.40.30:FF:000001">
    <property type="entry name" value="Argininosuccinate lyase"/>
    <property type="match status" value="1"/>
</dbReference>
<dbReference type="FunFam" id="1.20.200.10:FF:000015">
    <property type="entry name" value="argininosuccinate lyase isoform X2"/>
    <property type="match status" value="1"/>
</dbReference>
<dbReference type="Gene3D" id="1.10.40.30">
    <property type="entry name" value="Fumarase/aspartase (C-terminal domain)"/>
    <property type="match status" value="1"/>
</dbReference>
<dbReference type="Gene3D" id="1.20.200.10">
    <property type="entry name" value="Fumarase/aspartase (Central domain)"/>
    <property type="match status" value="1"/>
</dbReference>
<dbReference type="Gene3D" id="1.10.275.10">
    <property type="entry name" value="Fumarase/aspartase (N-terminal domain)"/>
    <property type="match status" value="1"/>
</dbReference>
<dbReference type="HAMAP" id="MF_00006">
    <property type="entry name" value="Arg_succ_lyase"/>
    <property type="match status" value="1"/>
</dbReference>
<dbReference type="InterPro" id="IPR029419">
    <property type="entry name" value="Arg_succ_lyase_C"/>
</dbReference>
<dbReference type="InterPro" id="IPR009049">
    <property type="entry name" value="Argininosuccinate_lyase"/>
</dbReference>
<dbReference type="InterPro" id="IPR024083">
    <property type="entry name" value="Fumarase/histidase_N"/>
</dbReference>
<dbReference type="InterPro" id="IPR020557">
    <property type="entry name" value="Fumarate_lyase_CS"/>
</dbReference>
<dbReference type="InterPro" id="IPR000362">
    <property type="entry name" value="Fumarate_lyase_fam"/>
</dbReference>
<dbReference type="InterPro" id="IPR022761">
    <property type="entry name" value="Fumarate_lyase_N"/>
</dbReference>
<dbReference type="InterPro" id="IPR008948">
    <property type="entry name" value="L-Aspartase-like"/>
</dbReference>
<dbReference type="NCBIfam" id="TIGR00838">
    <property type="entry name" value="argH"/>
    <property type="match status" value="1"/>
</dbReference>
<dbReference type="PANTHER" id="PTHR43814">
    <property type="entry name" value="ARGININOSUCCINATE LYASE"/>
    <property type="match status" value="1"/>
</dbReference>
<dbReference type="PANTHER" id="PTHR43814:SF1">
    <property type="entry name" value="ARGININOSUCCINATE LYASE"/>
    <property type="match status" value="1"/>
</dbReference>
<dbReference type="Pfam" id="PF14698">
    <property type="entry name" value="ASL_C2"/>
    <property type="match status" value="1"/>
</dbReference>
<dbReference type="Pfam" id="PF00206">
    <property type="entry name" value="Lyase_1"/>
    <property type="match status" value="1"/>
</dbReference>
<dbReference type="PRINTS" id="PR00145">
    <property type="entry name" value="ARGSUCLYASE"/>
</dbReference>
<dbReference type="PRINTS" id="PR00149">
    <property type="entry name" value="FUMRATELYASE"/>
</dbReference>
<dbReference type="SUPFAM" id="SSF48557">
    <property type="entry name" value="L-aspartase-like"/>
    <property type="match status" value="1"/>
</dbReference>
<dbReference type="PROSITE" id="PS00163">
    <property type="entry name" value="FUMARATE_LYASES"/>
    <property type="match status" value="1"/>
</dbReference>
<evidence type="ECO:0000255" key="1">
    <source>
        <dbReference type="HAMAP-Rule" id="MF_00006"/>
    </source>
</evidence>